<sequence>MKVVIVTSVASLLDASIQFQKTACRHHCNYLSMQIVKEIEEFGTINEKNLEFATWKDVIQNDEIDALVFYRVKQISISTGVLYESMMRNRTKPISMFFVRDCLAFDGDPPSFRMTSCNINAYNRNKIKDLIILMNMKTCNKKIIGEFIIDNFGSVNALLSIINSNVTWVTSVINNSNGRGINIRVSNNKMLTITSFRRFVNKLKMYKTTKCASQLDNLCTEINKMDIIDKK</sequence>
<accession>P0DSV0</accession>
<accession>P33874</accession>
<dbReference type="EMBL" id="L22579">
    <property type="protein sequence ID" value="AAA60788.1"/>
    <property type="molecule type" value="Genomic_DNA"/>
</dbReference>
<dbReference type="PIR" id="T28478">
    <property type="entry name" value="T28478"/>
</dbReference>
<dbReference type="RefSeq" id="NP_042084.1">
    <property type="nucleotide sequence ID" value="NC_001611.1"/>
</dbReference>
<dbReference type="SMR" id="P0DSV0"/>
<dbReference type="GeneID" id="1486577"/>
<dbReference type="KEGG" id="vg:1486577"/>
<dbReference type="Proteomes" id="UP000119805">
    <property type="component" value="Segment"/>
</dbReference>
<dbReference type="GO" id="GO:0044196">
    <property type="term" value="C:host cell nucleolus"/>
    <property type="evidence" value="ECO:0007669"/>
    <property type="project" value="UniProtKB-SubCell"/>
</dbReference>
<dbReference type="InterPro" id="IPR006798">
    <property type="entry name" value="Poxvirus_F16"/>
</dbReference>
<dbReference type="Pfam" id="PF04708">
    <property type="entry name" value="Pox_F16"/>
    <property type="match status" value="1"/>
</dbReference>
<dbReference type="PIRSF" id="PIRSF015792">
    <property type="entry name" value="VAC_F16L"/>
    <property type="match status" value="1"/>
</dbReference>
<gene>
    <name type="primary">OPG061</name>
    <name type="ORF">C20L</name>
    <name type="ORF">F16L</name>
</gene>
<organism>
    <name type="scientific">Variola virus</name>
    <dbReference type="NCBI Taxonomy" id="10255"/>
    <lineage>
        <taxon>Viruses</taxon>
        <taxon>Varidnaviria</taxon>
        <taxon>Bamfordvirae</taxon>
        <taxon>Nucleocytoviricota</taxon>
        <taxon>Pokkesviricetes</taxon>
        <taxon>Chitovirales</taxon>
        <taxon>Poxviridae</taxon>
        <taxon>Chordopoxvirinae</taxon>
        <taxon>Orthopoxvirus</taxon>
    </lineage>
</organism>
<organismHost>
    <name type="scientific">Homo sapiens</name>
    <name type="common">Human</name>
    <dbReference type="NCBI Taxonomy" id="9606"/>
</organismHost>
<protein>
    <recommendedName>
        <fullName>Protein OPG061</fullName>
    </recommendedName>
    <alternativeName>
        <fullName>Protein F16</fullName>
    </alternativeName>
</protein>
<comment type="subcellular location">
    <subcellularLocation>
        <location evidence="1">Host nucleus</location>
        <location evidence="1">Host nucleolus</location>
    </subcellularLocation>
</comment>
<comment type="induction">
    <text evidence="1">Expressed in the early phase of the viral replicative cycle.</text>
</comment>
<comment type="similarity">
    <text evidence="2">Belongs to the orthopoxvirus OPG058 family.</text>
</comment>
<proteinExistence type="inferred from homology"/>
<name>PG061_VARV</name>
<evidence type="ECO:0000250" key="1">
    <source>
        <dbReference type="UniProtKB" id="Q80HX3"/>
    </source>
</evidence>
<evidence type="ECO:0000305" key="2"/>
<feature type="chain" id="PRO_0000448189" description="Protein OPG061">
    <location>
        <begin position="1"/>
        <end position="231"/>
    </location>
</feature>
<keyword id="KW-0244">Early protein</keyword>
<keyword id="KW-1048">Host nucleus</keyword>
<reference key="1">
    <citation type="journal article" date="1993" name="Nature">
        <title>Potential virulence determinants in terminal regions of variola smallpox virus genome.</title>
        <authorList>
            <person name="Massung R.F."/>
            <person name="Esposito J.J."/>
            <person name="Liu L.I."/>
            <person name="Qi J."/>
            <person name="Utterback T.R."/>
            <person name="Knight J.C."/>
            <person name="Aubin L."/>
            <person name="Yuran T.E."/>
            <person name="Parsons J.M."/>
            <person name="Loparev V.N."/>
            <person name="Selivanov N.A."/>
            <person name="Cavallaro K.F."/>
            <person name="Kerlavage A.R."/>
            <person name="Mahy B.W.J."/>
            <person name="Venter J.C."/>
        </authorList>
    </citation>
    <scope>NUCLEOTIDE SEQUENCE [GENOMIC DNA]</scope>
    <source>
        <strain>Bangladesh-1975</strain>
    </source>
</reference>